<gene>
    <name type="primary">PTX2</name>
    <name type="synonym">SAP</name>
</gene>
<comment type="cofactor">
    <cofactor evidence="1">
        <name>Ca(2+)</name>
        <dbReference type="ChEBI" id="CHEBI:29108"/>
    </cofactor>
    <text evidence="1">Binds 2 calcium ions per subunit.</text>
</comment>
<comment type="subunit">
    <text>Homopentamer. Pentraxin (or pentaxin) have a discoid arrangement of 5 non-covalently bound subunits.</text>
</comment>
<comment type="subcellular location">
    <subcellularLocation>
        <location>Secreted</location>
    </subcellularLocation>
</comment>
<comment type="similarity">
    <text evidence="4">Belongs to the pentraxin family.</text>
</comment>
<protein>
    <recommendedName>
        <fullName>Serum amyloid P-component</fullName>
        <shortName>SAP</shortName>
    </recommendedName>
</protein>
<organism>
    <name type="scientific">Cavia porcellus</name>
    <name type="common">Guinea pig</name>
    <dbReference type="NCBI Taxonomy" id="10141"/>
    <lineage>
        <taxon>Eukaryota</taxon>
        <taxon>Metazoa</taxon>
        <taxon>Chordata</taxon>
        <taxon>Craniata</taxon>
        <taxon>Vertebrata</taxon>
        <taxon>Euteleostomi</taxon>
        <taxon>Mammalia</taxon>
        <taxon>Eutheria</taxon>
        <taxon>Euarchontoglires</taxon>
        <taxon>Glires</taxon>
        <taxon>Rodentia</taxon>
        <taxon>Hystricomorpha</taxon>
        <taxon>Caviidae</taxon>
        <taxon>Cavia</taxon>
    </lineage>
</organism>
<name>SAMP_CAVPO</name>
<feature type="signal peptide" evidence="1">
    <location>
        <begin position="1"/>
        <end position="19"/>
    </location>
</feature>
<feature type="chain" id="PRO_0000023538" description="Serum amyloid P-component">
    <location>
        <begin position="20"/>
        <end position="223"/>
    </location>
</feature>
<feature type="domain" description="Pentraxin (PTX)" evidence="3">
    <location>
        <begin position="24"/>
        <end position="223"/>
    </location>
</feature>
<feature type="binding site" evidence="3">
    <location>
        <position position="77"/>
    </location>
    <ligand>
        <name>Ca(2+)</name>
        <dbReference type="ChEBI" id="CHEBI:29108"/>
        <label>1</label>
    </ligand>
</feature>
<feature type="binding site" evidence="3">
    <location>
        <position position="78"/>
    </location>
    <ligand>
        <name>Ca(2+)</name>
        <dbReference type="ChEBI" id="CHEBI:29108"/>
        <label>1</label>
    </ligand>
</feature>
<feature type="binding site" evidence="3">
    <location>
        <position position="155"/>
    </location>
    <ligand>
        <name>Ca(2+)</name>
        <dbReference type="ChEBI" id="CHEBI:29108"/>
        <label>1</label>
    </ligand>
</feature>
<feature type="binding site" evidence="3">
    <location>
        <position position="155"/>
    </location>
    <ligand>
        <name>Ca(2+)</name>
        <dbReference type="ChEBI" id="CHEBI:29108"/>
        <label>2</label>
    </ligand>
</feature>
<feature type="binding site" evidence="3">
    <location>
        <position position="156"/>
    </location>
    <ligand>
        <name>Ca(2+)</name>
        <dbReference type="ChEBI" id="CHEBI:29108"/>
        <label>1</label>
    </ligand>
</feature>
<feature type="binding site" evidence="3">
    <location>
        <position position="157"/>
    </location>
    <ligand>
        <name>Ca(2+)</name>
        <dbReference type="ChEBI" id="CHEBI:29108"/>
        <label>1</label>
    </ligand>
</feature>
<feature type="binding site" evidence="3">
    <location>
        <position position="157"/>
    </location>
    <ligand>
        <name>Ca(2+)</name>
        <dbReference type="ChEBI" id="CHEBI:29108"/>
        <label>2</label>
    </ligand>
</feature>
<feature type="binding site" evidence="3">
    <location>
        <position position="167"/>
    </location>
    <ligand>
        <name>Ca(2+)</name>
        <dbReference type="ChEBI" id="CHEBI:29108"/>
        <label>2</label>
    </ligand>
</feature>
<feature type="glycosylation site" description="N-linked (GlcNAc...) asparagine" evidence="2">
    <location>
        <position position="198"/>
    </location>
</feature>
<feature type="disulfide bond" evidence="3">
    <location>
        <begin position="55"/>
        <end position="114"/>
    </location>
</feature>
<sequence>MDKMLFWVSVFTIFLDVFAQTDLDKKVFVFPRESSSDHVNLITKLETPLQEFTVCLRAYSDLSRHYSLFSYNTPGKDNELLIYKEKLGEYSLYIGGTKVTARVPEEILAPVHICTSWESSSGIAEFWINGKPLVKKGLKRGYSVAAHPKIILGQEQDSYGGKFDRGQSFLGEIGDVYMWDSVLSPDDVQAVYYGSYVNGSILNWQALNYELNDYVIIKPRVWD</sequence>
<dbReference type="EMBL" id="S60421">
    <property type="protein sequence ID" value="AAC60661.1"/>
    <property type="molecule type" value="Genomic_DNA"/>
</dbReference>
<dbReference type="PIR" id="JX0260">
    <property type="entry name" value="JX0260"/>
</dbReference>
<dbReference type="SMR" id="P49255"/>
<dbReference type="FunCoup" id="P49255">
    <property type="interactions" value="73"/>
</dbReference>
<dbReference type="STRING" id="10141.ENSCPOP00000019069"/>
<dbReference type="GlyCosmos" id="P49255">
    <property type="glycosylation" value="1 site, No reported glycans"/>
</dbReference>
<dbReference type="Ensembl" id="ENSCPOT00000022170.2">
    <property type="protein sequence ID" value="ENSCPOP00000019069.1"/>
    <property type="gene ID" value="ENSCPOG00000009766.4"/>
</dbReference>
<dbReference type="GeneID" id="100726823"/>
<dbReference type="KEGG" id="cpoc:100726823"/>
<dbReference type="CTD" id="325"/>
<dbReference type="VEuPathDB" id="HostDB:ENSCPOG00000009766"/>
<dbReference type="eggNOG" id="ENOG502S201">
    <property type="taxonomic scope" value="Eukaryota"/>
</dbReference>
<dbReference type="GeneTree" id="ENSGT01100000263515"/>
<dbReference type="HOGENOM" id="CLU_032051_2_0_1"/>
<dbReference type="InParanoid" id="P49255"/>
<dbReference type="OMA" id="NPNILDW"/>
<dbReference type="OrthoDB" id="547680at2759"/>
<dbReference type="TreeFam" id="TF330208"/>
<dbReference type="Proteomes" id="UP000005447">
    <property type="component" value="Unassembled WGS sequence"/>
</dbReference>
<dbReference type="Bgee" id="ENSCPOG00000009766">
    <property type="expression patterns" value="Expressed in liver and 1 other cell type or tissue"/>
</dbReference>
<dbReference type="GO" id="GO:0005615">
    <property type="term" value="C:extracellular space"/>
    <property type="evidence" value="ECO:0007669"/>
    <property type="project" value="Ensembl"/>
</dbReference>
<dbReference type="GO" id="GO:0005509">
    <property type="term" value="F:calcium ion binding"/>
    <property type="evidence" value="ECO:0007669"/>
    <property type="project" value="Ensembl"/>
</dbReference>
<dbReference type="GO" id="GO:0001849">
    <property type="term" value="F:complement component C1q complex binding"/>
    <property type="evidence" value="ECO:0007669"/>
    <property type="project" value="Ensembl"/>
</dbReference>
<dbReference type="GO" id="GO:0042802">
    <property type="term" value="F:identical protein binding"/>
    <property type="evidence" value="ECO:0007669"/>
    <property type="project" value="Ensembl"/>
</dbReference>
<dbReference type="GO" id="GO:0046790">
    <property type="term" value="F:virion binding"/>
    <property type="evidence" value="ECO:0007669"/>
    <property type="project" value="Ensembl"/>
</dbReference>
<dbReference type="GO" id="GO:0006953">
    <property type="term" value="P:acute-phase response"/>
    <property type="evidence" value="ECO:0007669"/>
    <property type="project" value="UniProtKB-KW"/>
</dbReference>
<dbReference type="GO" id="GO:0046597">
    <property type="term" value="P:host-mediated suppression of symbiont invasion"/>
    <property type="evidence" value="ECO:0007669"/>
    <property type="project" value="Ensembl"/>
</dbReference>
<dbReference type="GO" id="GO:0044871">
    <property type="term" value="P:negative regulation by host of viral glycoprotein metabolic process"/>
    <property type="evidence" value="ECO:0007669"/>
    <property type="project" value="Ensembl"/>
</dbReference>
<dbReference type="GO" id="GO:0045656">
    <property type="term" value="P:negative regulation of monocyte differentiation"/>
    <property type="evidence" value="ECO:0007669"/>
    <property type="project" value="Ensembl"/>
</dbReference>
<dbReference type="CDD" id="cd00152">
    <property type="entry name" value="PTX"/>
    <property type="match status" value="1"/>
</dbReference>
<dbReference type="FunFam" id="2.60.120.200:FF:000070">
    <property type="entry name" value="Serum amyloid P-component"/>
    <property type="match status" value="1"/>
</dbReference>
<dbReference type="Gene3D" id="2.60.120.200">
    <property type="match status" value="1"/>
</dbReference>
<dbReference type="InterPro" id="IPR013320">
    <property type="entry name" value="ConA-like_dom_sf"/>
</dbReference>
<dbReference type="InterPro" id="IPR030476">
    <property type="entry name" value="Pentaxin_CS"/>
</dbReference>
<dbReference type="InterPro" id="IPR001759">
    <property type="entry name" value="Pentraxin-related"/>
</dbReference>
<dbReference type="InterPro" id="IPR051005">
    <property type="entry name" value="Pentraxin_domain"/>
</dbReference>
<dbReference type="PANTHER" id="PTHR45869">
    <property type="entry name" value="C-REACTIVE PROTEIN-RELATED"/>
    <property type="match status" value="1"/>
</dbReference>
<dbReference type="PANTHER" id="PTHR45869:SF5">
    <property type="entry name" value="SERUM AMYLOID P-COMPONENT"/>
    <property type="match status" value="1"/>
</dbReference>
<dbReference type="Pfam" id="PF00354">
    <property type="entry name" value="Pentaxin"/>
    <property type="match status" value="1"/>
</dbReference>
<dbReference type="PRINTS" id="PR00895">
    <property type="entry name" value="PENTAXIN"/>
</dbReference>
<dbReference type="SMART" id="SM00159">
    <property type="entry name" value="PTX"/>
    <property type="match status" value="1"/>
</dbReference>
<dbReference type="SUPFAM" id="SSF49899">
    <property type="entry name" value="Concanavalin A-like lectins/glucanases"/>
    <property type="match status" value="1"/>
</dbReference>
<dbReference type="PROSITE" id="PS00289">
    <property type="entry name" value="PTX_1"/>
    <property type="match status" value="1"/>
</dbReference>
<dbReference type="PROSITE" id="PS51828">
    <property type="entry name" value="PTX_2"/>
    <property type="match status" value="1"/>
</dbReference>
<reference key="1">
    <citation type="journal article" date="1993" name="J. Biochem.">
        <title>Structure, expression, and evolution of guinea pig serum amyloid P component and C-reactive protein.</title>
        <authorList>
            <person name="Rubio N."/>
            <person name="Sharp P.M."/>
            <person name="Rits M."/>
            <person name="Zahedi K."/>
            <person name="Whitehead A.S."/>
        </authorList>
    </citation>
    <scope>NUCLEOTIDE SEQUENCE [GENOMIC DNA]</scope>
    <source>
        <strain>Hartley</strain>
    </source>
</reference>
<evidence type="ECO:0000250" key="1"/>
<evidence type="ECO:0000255" key="2"/>
<evidence type="ECO:0000255" key="3">
    <source>
        <dbReference type="PROSITE-ProRule" id="PRU01172"/>
    </source>
</evidence>
<evidence type="ECO:0000305" key="4"/>
<keyword id="KW-0011">Acute phase</keyword>
<keyword id="KW-0034">Amyloid</keyword>
<keyword id="KW-0106">Calcium</keyword>
<keyword id="KW-1015">Disulfide bond</keyword>
<keyword id="KW-0325">Glycoprotein</keyword>
<keyword id="KW-0479">Metal-binding</keyword>
<keyword id="KW-1185">Reference proteome</keyword>
<keyword id="KW-0964">Secreted</keyword>
<keyword id="KW-0732">Signal</keyword>
<accession>P49255</accession>
<proteinExistence type="inferred from homology"/>